<feature type="chain" id="PRO_1000115781" description="1-deoxy-D-xylulose-5-phosphate synthase">
    <location>
        <begin position="1"/>
        <end position="643"/>
    </location>
</feature>
<feature type="binding site" evidence="1">
    <location>
        <position position="78"/>
    </location>
    <ligand>
        <name>thiamine diphosphate</name>
        <dbReference type="ChEBI" id="CHEBI:58937"/>
    </ligand>
</feature>
<feature type="binding site" evidence="1">
    <location>
        <begin position="119"/>
        <end position="121"/>
    </location>
    <ligand>
        <name>thiamine diphosphate</name>
        <dbReference type="ChEBI" id="CHEBI:58937"/>
    </ligand>
</feature>
<feature type="binding site" evidence="1">
    <location>
        <position position="150"/>
    </location>
    <ligand>
        <name>Mg(2+)</name>
        <dbReference type="ChEBI" id="CHEBI:18420"/>
    </ligand>
</feature>
<feature type="binding site" evidence="1">
    <location>
        <begin position="151"/>
        <end position="152"/>
    </location>
    <ligand>
        <name>thiamine diphosphate</name>
        <dbReference type="ChEBI" id="CHEBI:58937"/>
    </ligand>
</feature>
<feature type="binding site" evidence="1">
    <location>
        <position position="179"/>
    </location>
    <ligand>
        <name>Mg(2+)</name>
        <dbReference type="ChEBI" id="CHEBI:18420"/>
    </ligand>
</feature>
<feature type="binding site" evidence="1">
    <location>
        <position position="179"/>
    </location>
    <ligand>
        <name>thiamine diphosphate</name>
        <dbReference type="ChEBI" id="CHEBI:58937"/>
    </ligand>
</feature>
<feature type="binding site" evidence="1">
    <location>
        <position position="288"/>
    </location>
    <ligand>
        <name>thiamine diphosphate</name>
        <dbReference type="ChEBI" id="CHEBI:58937"/>
    </ligand>
</feature>
<feature type="binding site" evidence="1">
    <location>
        <position position="370"/>
    </location>
    <ligand>
        <name>thiamine diphosphate</name>
        <dbReference type="ChEBI" id="CHEBI:58937"/>
    </ligand>
</feature>
<reference key="1">
    <citation type="submission" date="2007-07" db="EMBL/GenBank/DDBJ databases">
        <title>Complete sequence of chromosome of Xanthobacter autotrophicus Py2.</title>
        <authorList>
            <consortium name="US DOE Joint Genome Institute"/>
            <person name="Copeland A."/>
            <person name="Lucas S."/>
            <person name="Lapidus A."/>
            <person name="Barry K."/>
            <person name="Glavina del Rio T."/>
            <person name="Hammon N."/>
            <person name="Israni S."/>
            <person name="Dalin E."/>
            <person name="Tice H."/>
            <person name="Pitluck S."/>
            <person name="Sims D."/>
            <person name="Brettin T."/>
            <person name="Bruce D."/>
            <person name="Detter J.C."/>
            <person name="Han C."/>
            <person name="Tapia R."/>
            <person name="Brainard J."/>
            <person name="Schmutz J."/>
            <person name="Larimer F."/>
            <person name="Land M."/>
            <person name="Hauser L."/>
            <person name="Kyrpides N."/>
            <person name="Kim E."/>
            <person name="Ensigns S.A."/>
            <person name="Richardson P."/>
        </authorList>
    </citation>
    <scope>NUCLEOTIDE SEQUENCE [LARGE SCALE GENOMIC DNA]</scope>
    <source>
        <strain>ATCC BAA-1158 / Py2</strain>
    </source>
</reference>
<proteinExistence type="inferred from homology"/>
<dbReference type="EC" id="2.2.1.7" evidence="1"/>
<dbReference type="EMBL" id="CP000781">
    <property type="protein sequence ID" value="ABS69952.1"/>
    <property type="molecule type" value="Genomic_DNA"/>
</dbReference>
<dbReference type="SMR" id="A7IPK6"/>
<dbReference type="STRING" id="78245.Xaut_4733"/>
<dbReference type="KEGG" id="xau:Xaut_4733"/>
<dbReference type="eggNOG" id="COG1154">
    <property type="taxonomic scope" value="Bacteria"/>
</dbReference>
<dbReference type="HOGENOM" id="CLU_009227_1_4_5"/>
<dbReference type="OrthoDB" id="9803371at2"/>
<dbReference type="PhylomeDB" id="A7IPK6"/>
<dbReference type="UniPathway" id="UPA00064">
    <property type="reaction ID" value="UER00091"/>
</dbReference>
<dbReference type="Proteomes" id="UP000002417">
    <property type="component" value="Chromosome"/>
</dbReference>
<dbReference type="GO" id="GO:0008661">
    <property type="term" value="F:1-deoxy-D-xylulose-5-phosphate synthase activity"/>
    <property type="evidence" value="ECO:0007669"/>
    <property type="project" value="UniProtKB-UniRule"/>
</dbReference>
<dbReference type="GO" id="GO:0000287">
    <property type="term" value="F:magnesium ion binding"/>
    <property type="evidence" value="ECO:0007669"/>
    <property type="project" value="UniProtKB-UniRule"/>
</dbReference>
<dbReference type="GO" id="GO:0030976">
    <property type="term" value="F:thiamine pyrophosphate binding"/>
    <property type="evidence" value="ECO:0007669"/>
    <property type="project" value="UniProtKB-UniRule"/>
</dbReference>
<dbReference type="GO" id="GO:0052865">
    <property type="term" value="P:1-deoxy-D-xylulose 5-phosphate biosynthetic process"/>
    <property type="evidence" value="ECO:0007669"/>
    <property type="project" value="UniProtKB-UniPathway"/>
</dbReference>
<dbReference type="GO" id="GO:0019682">
    <property type="term" value="P:glyceraldehyde-3-phosphate metabolic process"/>
    <property type="evidence" value="ECO:0007669"/>
    <property type="project" value="UniProtKB-ARBA"/>
</dbReference>
<dbReference type="GO" id="GO:0016114">
    <property type="term" value="P:terpenoid biosynthetic process"/>
    <property type="evidence" value="ECO:0007669"/>
    <property type="project" value="UniProtKB-UniRule"/>
</dbReference>
<dbReference type="GO" id="GO:0009228">
    <property type="term" value="P:thiamine biosynthetic process"/>
    <property type="evidence" value="ECO:0007669"/>
    <property type="project" value="UniProtKB-UniRule"/>
</dbReference>
<dbReference type="CDD" id="cd02007">
    <property type="entry name" value="TPP_DXS"/>
    <property type="match status" value="1"/>
</dbReference>
<dbReference type="CDD" id="cd07033">
    <property type="entry name" value="TPP_PYR_DXS_TK_like"/>
    <property type="match status" value="1"/>
</dbReference>
<dbReference type="FunFam" id="3.40.50.920:FF:000002">
    <property type="entry name" value="1-deoxy-D-xylulose-5-phosphate synthase"/>
    <property type="match status" value="1"/>
</dbReference>
<dbReference type="FunFam" id="3.40.50.970:FF:000005">
    <property type="entry name" value="1-deoxy-D-xylulose-5-phosphate synthase"/>
    <property type="match status" value="1"/>
</dbReference>
<dbReference type="Gene3D" id="3.40.50.920">
    <property type="match status" value="1"/>
</dbReference>
<dbReference type="Gene3D" id="3.40.50.970">
    <property type="match status" value="2"/>
</dbReference>
<dbReference type="HAMAP" id="MF_00315">
    <property type="entry name" value="DXP_synth"/>
    <property type="match status" value="1"/>
</dbReference>
<dbReference type="InterPro" id="IPR005477">
    <property type="entry name" value="Dxylulose-5-P_synthase"/>
</dbReference>
<dbReference type="InterPro" id="IPR029061">
    <property type="entry name" value="THDP-binding"/>
</dbReference>
<dbReference type="InterPro" id="IPR009014">
    <property type="entry name" value="Transketo_C/PFOR_II"/>
</dbReference>
<dbReference type="InterPro" id="IPR005475">
    <property type="entry name" value="Transketolase-like_Pyr-bd"/>
</dbReference>
<dbReference type="InterPro" id="IPR020826">
    <property type="entry name" value="Transketolase_BS"/>
</dbReference>
<dbReference type="InterPro" id="IPR033248">
    <property type="entry name" value="Transketolase_C"/>
</dbReference>
<dbReference type="InterPro" id="IPR049557">
    <property type="entry name" value="Transketolase_CS"/>
</dbReference>
<dbReference type="NCBIfam" id="TIGR00204">
    <property type="entry name" value="dxs"/>
    <property type="match status" value="1"/>
</dbReference>
<dbReference type="NCBIfam" id="NF003933">
    <property type="entry name" value="PRK05444.2-2"/>
    <property type="match status" value="1"/>
</dbReference>
<dbReference type="PANTHER" id="PTHR43322">
    <property type="entry name" value="1-D-DEOXYXYLULOSE 5-PHOSPHATE SYNTHASE-RELATED"/>
    <property type="match status" value="1"/>
</dbReference>
<dbReference type="PANTHER" id="PTHR43322:SF5">
    <property type="entry name" value="1-DEOXY-D-XYLULOSE-5-PHOSPHATE SYNTHASE, CHLOROPLASTIC"/>
    <property type="match status" value="1"/>
</dbReference>
<dbReference type="Pfam" id="PF13292">
    <property type="entry name" value="DXP_synthase_N"/>
    <property type="match status" value="1"/>
</dbReference>
<dbReference type="Pfam" id="PF02779">
    <property type="entry name" value="Transket_pyr"/>
    <property type="match status" value="1"/>
</dbReference>
<dbReference type="Pfam" id="PF02780">
    <property type="entry name" value="Transketolase_C"/>
    <property type="match status" value="1"/>
</dbReference>
<dbReference type="SMART" id="SM00861">
    <property type="entry name" value="Transket_pyr"/>
    <property type="match status" value="1"/>
</dbReference>
<dbReference type="SUPFAM" id="SSF52518">
    <property type="entry name" value="Thiamin diphosphate-binding fold (THDP-binding)"/>
    <property type="match status" value="2"/>
</dbReference>
<dbReference type="SUPFAM" id="SSF52922">
    <property type="entry name" value="TK C-terminal domain-like"/>
    <property type="match status" value="1"/>
</dbReference>
<dbReference type="PROSITE" id="PS00801">
    <property type="entry name" value="TRANSKETOLASE_1"/>
    <property type="match status" value="1"/>
</dbReference>
<dbReference type="PROSITE" id="PS00802">
    <property type="entry name" value="TRANSKETOLASE_2"/>
    <property type="match status" value="1"/>
</dbReference>
<comment type="function">
    <text evidence="1">Catalyzes the acyloin condensation reaction between C atoms 2 and 3 of pyruvate and glyceraldehyde 3-phosphate to yield 1-deoxy-D-xylulose-5-phosphate (DXP).</text>
</comment>
<comment type="catalytic activity">
    <reaction evidence="1">
        <text>D-glyceraldehyde 3-phosphate + pyruvate + H(+) = 1-deoxy-D-xylulose 5-phosphate + CO2</text>
        <dbReference type="Rhea" id="RHEA:12605"/>
        <dbReference type="ChEBI" id="CHEBI:15361"/>
        <dbReference type="ChEBI" id="CHEBI:15378"/>
        <dbReference type="ChEBI" id="CHEBI:16526"/>
        <dbReference type="ChEBI" id="CHEBI:57792"/>
        <dbReference type="ChEBI" id="CHEBI:59776"/>
        <dbReference type="EC" id="2.2.1.7"/>
    </reaction>
</comment>
<comment type="cofactor">
    <cofactor evidence="1">
        <name>Mg(2+)</name>
        <dbReference type="ChEBI" id="CHEBI:18420"/>
    </cofactor>
    <text evidence="1">Binds 1 Mg(2+) ion per subunit.</text>
</comment>
<comment type="cofactor">
    <cofactor evidence="1">
        <name>thiamine diphosphate</name>
        <dbReference type="ChEBI" id="CHEBI:58937"/>
    </cofactor>
    <text evidence="1">Binds 1 thiamine pyrophosphate per subunit.</text>
</comment>
<comment type="pathway">
    <text evidence="1">Metabolic intermediate biosynthesis; 1-deoxy-D-xylulose 5-phosphate biosynthesis; 1-deoxy-D-xylulose 5-phosphate from D-glyceraldehyde 3-phosphate and pyruvate: step 1/1.</text>
</comment>
<comment type="subunit">
    <text evidence="1">Homodimer.</text>
</comment>
<comment type="similarity">
    <text evidence="1">Belongs to the transketolase family. DXPS subfamily.</text>
</comment>
<gene>
    <name evidence="1" type="primary">dxs</name>
    <name type="ordered locus">Xaut_4733</name>
</gene>
<sequence>MTLLKTPLLDTIRDAADVRRLPQDKLAQLAAELRAETIDAVSVTGGHLGAGLGVVELTVALHHVFNTPHDRLIWDVGHQCYPHKILTGRRDRIRTLRQGGGLSGFTRRAESEYDPFGAAHSSTSISAGLGMAVARDLSGEERNVVCVIGDGAMSAGMAYEAMNNAGAMDSRLIVILNDNDMSIAPPTGAMSAYLARLISGQTYRSLREIGKQIAGHLPKFVERGAARAEEFARGFWTGGTLFEELGFYYVGPIDGHNLDHLLPVLKNVRDAKTGPILVHVVTQKGKGYAPAEASADKYHGVVKFDVVTGAQVKAKSNAPSYTRVFAESLISQARHDPKVVAITAAMPSGTGLDLFGQVYPERTFDVGIAEQHAVTFAAGLAAEGFKPFCALYSTFLQRAYDQVVHDVALQGLPVRFIIDRAGLVGADGATHAGAFDIAFLACLPGMTVMAPADEAELVHMMATMVAFDDGPSAVRFPRGEGVGVERPERGEVLPIGKGRIVHGTGEGDIALLSLGTRLAACLDAAERLEAAGFTVTVADARFAKPLDRELVLKLAAGHGALVTVEEGSVGGFGSHVLQLVTDEGLLDRGAVKVRAMVLPDIYIDQETQARQLAAAGLDADAIVAKVEGLLGKAKAGVSLHKAG</sequence>
<accession>A7IPK6</accession>
<evidence type="ECO:0000255" key="1">
    <source>
        <dbReference type="HAMAP-Rule" id="MF_00315"/>
    </source>
</evidence>
<protein>
    <recommendedName>
        <fullName evidence="1">1-deoxy-D-xylulose-5-phosphate synthase</fullName>
        <ecNumber evidence="1">2.2.1.7</ecNumber>
    </recommendedName>
    <alternativeName>
        <fullName evidence="1">1-deoxyxylulose-5-phosphate synthase</fullName>
        <shortName evidence="1">DXP synthase</shortName>
        <shortName evidence="1">DXPS</shortName>
    </alternativeName>
</protein>
<keyword id="KW-0414">Isoprene biosynthesis</keyword>
<keyword id="KW-0460">Magnesium</keyword>
<keyword id="KW-0479">Metal-binding</keyword>
<keyword id="KW-1185">Reference proteome</keyword>
<keyword id="KW-0784">Thiamine biosynthesis</keyword>
<keyword id="KW-0786">Thiamine pyrophosphate</keyword>
<keyword id="KW-0808">Transferase</keyword>
<organism>
    <name type="scientific">Xanthobacter autotrophicus (strain ATCC BAA-1158 / Py2)</name>
    <dbReference type="NCBI Taxonomy" id="78245"/>
    <lineage>
        <taxon>Bacteria</taxon>
        <taxon>Pseudomonadati</taxon>
        <taxon>Pseudomonadota</taxon>
        <taxon>Alphaproteobacteria</taxon>
        <taxon>Hyphomicrobiales</taxon>
        <taxon>Xanthobacteraceae</taxon>
        <taxon>Xanthobacter</taxon>
    </lineage>
</organism>
<name>DXS_XANP2</name>